<name>PROB_YERPY</name>
<protein>
    <recommendedName>
        <fullName evidence="1">Glutamate 5-kinase</fullName>
        <ecNumber evidence="1">2.7.2.11</ecNumber>
    </recommendedName>
    <alternativeName>
        <fullName evidence="1">Gamma-glutamyl kinase</fullName>
        <shortName evidence="1">GK</shortName>
    </alternativeName>
</protein>
<gene>
    <name evidence="1" type="primary">proB</name>
    <name type="ordered locus">YPK_3288</name>
</gene>
<feature type="chain" id="PRO_1000193720" description="Glutamate 5-kinase">
    <location>
        <begin position="1"/>
        <end position="367"/>
    </location>
</feature>
<feature type="domain" description="PUA" evidence="1">
    <location>
        <begin position="275"/>
        <end position="353"/>
    </location>
</feature>
<feature type="binding site" evidence="1">
    <location>
        <position position="10"/>
    </location>
    <ligand>
        <name>ATP</name>
        <dbReference type="ChEBI" id="CHEBI:30616"/>
    </ligand>
</feature>
<feature type="binding site" evidence="1">
    <location>
        <position position="50"/>
    </location>
    <ligand>
        <name>substrate</name>
    </ligand>
</feature>
<feature type="binding site" evidence="1">
    <location>
        <position position="137"/>
    </location>
    <ligand>
        <name>substrate</name>
    </ligand>
</feature>
<feature type="binding site" evidence="1">
    <location>
        <position position="149"/>
    </location>
    <ligand>
        <name>substrate</name>
    </ligand>
</feature>
<feature type="binding site" evidence="1">
    <location>
        <begin position="169"/>
        <end position="170"/>
    </location>
    <ligand>
        <name>ATP</name>
        <dbReference type="ChEBI" id="CHEBI:30616"/>
    </ligand>
</feature>
<feature type="binding site" evidence="1">
    <location>
        <begin position="211"/>
        <end position="217"/>
    </location>
    <ligand>
        <name>ATP</name>
        <dbReference type="ChEBI" id="CHEBI:30616"/>
    </ligand>
</feature>
<accession>B1JIH3</accession>
<organism>
    <name type="scientific">Yersinia pseudotuberculosis serotype O:3 (strain YPIII)</name>
    <dbReference type="NCBI Taxonomy" id="502800"/>
    <lineage>
        <taxon>Bacteria</taxon>
        <taxon>Pseudomonadati</taxon>
        <taxon>Pseudomonadota</taxon>
        <taxon>Gammaproteobacteria</taxon>
        <taxon>Enterobacterales</taxon>
        <taxon>Yersiniaceae</taxon>
        <taxon>Yersinia</taxon>
    </lineage>
</organism>
<keyword id="KW-0028">Amino-acid biosynthesis</keyword>
<keyword id="KW-0067">ATP-binding</keyword>
<keyword id="KW-0963">Cytoplasm</keyword>
<keyword id="KW-0418">Kinase</keyword>
<keyword id="KW-0547">Nucleotide-binding</keyword>
<keyword id="KW-0641">Proline biosynthesis</keyword>
<keyword id="KW-0808">Transferase</keyword>
<dbReference type="EC" id="2.7.2.11" evidence="1"/>
<dbReference type="EMBL" id="CP000950">
    <property type="protein sequence ID" value="ACA69557.1"/>
    <property type="molecule type" value="Genomic_DNA"/>
</dbReference>
<dbReference type="RefSeq" id="WP_002208701.1">
    <property type="nucleotide sequence ID" value="NZ_CP009792.1"/>
</dbReference>
<dbReference type="SMR" id="B1JIH3"/>
<dbReference type="GeneID" id="57975496"/>
<dbReference type="KEGG" id="ypy:YPK_3288"/>
<dbReference type="PATRIC" id="fig|502800.11.peg.4021"/>
<dbReference type="UniPathway" id="UPA00098">
    <property type="reaction ID" value="UER00359"/>
</dbReference>
<dbReference type="GO" id="GO:0005829">
    <property type="term" value="C:cytosol"/>
    <property type="evidence" value="ECO:0007669"/>
    <property type="project" value="TreeGrafter"/>
</dbReference>
<dbReference type="GO" id="GO:0005524">
    <property type="term" value="F:ATP binding"/>
    <property type="evidence" value="ECO:0007669"/>
    <property type="project" value="UniProtKB-KW"/>
</dbReference>
<dbReference type="GO" id="GO:0004349">
    <property type="term" value="F:glutamate 5-kinase activity"/>
    <property type="evidence" value="ECO:0007669"/>
    <property type="project" value="UniProtKB-UniRule"/>
</dbReference>
<dbReference type="GO" id="GO:0003723">
    <property type="term" value="F:RNA binding"/>
    <property type="evidence" value="ECO:0007669"/>
    <property type="project" value="InterPro"/>
</dbReference>
<dbReference type="GO" id="GO:0055129">
    <property type="term" value="P:L-proline biosynthetic process"/>
    <property type="evidence" value="ECO:0007669"/>
    <property type="project" value="UniProtKB-UniRule"/>
</dbReference>
<dbReference type="CDD" id="cd04242">
    <property type="entry name" value="AAK_G5K_ProB"/>
    <property type="match status" value="1"/>
</dbReference>
<dbReference type="CDD" id="cd21157">
    <property type="entry name" value="PUA_G5K"/>
    <property type="match status" value="1"/>
</dbReference>
<dbReference type="FunFam" id="2.30.130.10:FF:000003">
    <property type="entry name" value="Glutamate 5-kinase"/>
    <property type="match status" value="1"/>
</dbReference>
<dbReference type="FunFam" id="3.40.1160.10:FF:000006">
    <property type="entry name" value="Glutamate 5-kinase"/>
    <property type="match status" value="1"/>
</dbReference>
<dbReference type="Gene3D" id="3.40.1160.10">
    <property type="entry name" value="Acetylglutamate kinase-like"/>
    <property type="match status" value="2"/>
</dbReference>
<dbReference type="Gene3D" id="2.30.130.10">
    <property type="entry name" value="PUA domain"/>
    <property type="match status" value="1"/>
</dbReference>
<dbReference type="HAMAP" id="MF_00456">
    <property type="entry name" value="ProB"/>
    <property type="match status" value="1"/>
</dbReference>
<dbReference type="InterPro" id="IPR036393">
    <property type="entry name" value="AceGlu_kinase-like_sf"/>
</dbReference>
<dbReference type="InterPro" id="IPR001048">
    <property type="entry name" value="Asp/Glu/Uridylate_kinase"/>
</dbReference>
<dbReference type="InterPro" id="IPR041739">
    <property type="entry name" value="G5K_ProB"/>
</dbReference>
<dbReference type="InterPro" id="IPR001057">
    <property type="entry name" value="Glu/AcGlu_kinase"/>
</dbReference>
<dbReference type="InterPro" id="IPR011529">
    <property type="entry name" value="Glu_5kinase"/>
</dbReference>
<dbReference type="InterPro" id="IPR005715">
    <property type="entry name" value="Glu_5kinase/COase_Synthase"/>
</dbReference>
<dbReference type="InterPro" id="IPR019797">
    <property type="entry name" value="Glutamate_5-kinase_CS"/>
</dbReference>
<dbReference type="InterPro" id="IPR002478">
    <property type="entry name" value="PUA"/>
</dbReference>
<dbReference type="InterPro" id="IPR015947">
    <property type="entry name" value="PUA-like_sf"/>
</dbReference>
<dbReference type="InterPro" id="IPR036974">
    <property type="entry name" value="PUA_sf"/>
</dbReference>
<dbReference type="NCBIfam" id="TIGR01027">
    <property type="entry name" value="proB"/>
    <property type="match status" value="1"/>
</dbReference>
<dbReference type="PANTHER" id="PTHR43654">
    <property type="entry name" value="GLUTAMATE 5-KINASE"/>
    <property type="match status" value="1"/>
</dbReference>
<dbReference type="PANTHER" id="PTHR43654:SF1">
    <property type="entry name" value="ISOPENTENYL PHOSPHATE KINASE"/>
    <property type="match status" value="1"/>
</dbReference>
<dbReference type="Pfam" id="PF00696">
    <property type="entry name" value="AA_kinase"/>
    <property type="match status" value="1"/>
</dbReference>
<dbReference type="Pfam" id="PF01472">
    <property type="entry name" value="PUA"/>
    <property type="match status" value="1"/>
</dbReference>
<dbReference type="PIRSF" id="PIRSF000729">
    <property type="entry name" value="GK"/>
    <property type="match status" value="1"/>
</dbReference>
<dbReference type="PRINTS" id="PR00474">
    <property type="entry name" value="GLU5KINASE"/>
</dbReference>
<dbReference type="SMART" id="SM00359">
    <property type="entry name" value="PUA"/>
    <property type="match status" value="1"/>
</dbReference>
<dbReference type="SUPFAM" id="SSF53633">
    <property type="entry name" value="Carbamate kinase-like"/>
    <property type="match status" value="1"/>
</dbReference>
<dbReference type="SUPFAM" id="SSF88697">
    <property type="entry name" value="PUA domain-like"/>
    <property type="match status" value="1"/>
</dbReference>
<dbReference type="PROSITE" id="PS00902">
    <property type="entry name" value="GLUTAMATE_5_KINASE"/>
    <property type="match status" value="1"/>
</dbReference>
<dbReference type="PROSITE" id="PS50890">
    <property type="entry name" value="PUA"/>
    <property type="match status" value="1"/>
</dbReference>
<comment type="function">
    <text evidence="1">Catalyzes the transfer of a phosphate group to glutamate to form L-glutamate 5-phosphate.</text>
</comment>
<comment type="catalytic activity">
    <reaction evidence="1">
        <text>L-glutamate + ATP = L-glutamyl 5-phosphate + ADP</text>
        <dbReference type="Rhea" id="RHEA:14877"/>
        <dbReference type="ChEBI" id="CHEBI:29985"/>
        <dbReference type="ChEBI" id="CHEBI:30616"/>
        <dbReference type="ChEBI" id="CHEBI:58274"/>
        <dbReference type="ChEBI" id="CHEBI:456216"/>
        <dbReference type="EC" id="2.7.2.11"/>
    </reaction>
</comment>
<comment type="pathway">
    <text evidence="1">Amino-acid biosynthesis; L-proline biosynthesis; L-glutamate 5-semialdehyde from L-glutamate: step 1/2.</text>
</comment>
<comment type="subcellular location">
    <subcellularLocation>
        <location evidence="1">Cytoplasm</location>
    </subcellularLocation>
</comment>
<comment type="similarity">
    <text evidence="1">Belongs to the glutamate 5-kinase family.</text>
</comment>
<evidence type="ECO:0000255" key="1">
    <source>
        <dbReference type="HAMAP-Rule" id="MF_00456"/>
    </source>
</evidence>
<proteinExistence type="inferred from homology"/>
<sequence length="367" mass="39291">MSGSQTLVVKLGTSVLTGGSRRLNRAHIVELVRQCAQQHAKGHRIVIVTSGAIAAGREHLGYPELPATIASKQLLAAVGQSRLIQLWEQLFSIYGIHIGQMLLTRADLEDRERFLNARDTMNALLDNRIVPVINENDAVATAEIKVGDNDNLSALAAILASADKLLLLTDQAGLYTADPRNNPEAELIREVHGIDDVLRGMAGDSVSGLGTGGMATKLQAADVACRAGIDVVIAAGSQVGVIADVIDGTPVGTRFHSLETPLENRKRWIFGAPPAGEITVDDGAVFAIMERGSSLLPKGIRSVKGDFSRGEVIRIRNLNGRDLAHGVSRYNSDALRMLAGHHSQQISEILGYEYGPVAVHRDDMIVS</sequence>
<reference key="1">
    <citation type="submission" date="2008-02" db="EMBL/GenBank/DDBJ databases">
        <title>Complete sequence of Yersinia pseudotuberculosis YPIII.</title>
        <authorList>
            <consortium name="US DOE Joint Genome Institute"/>
            <person name="Copeland A."/>
            <person name="Lucas S."/>
            <person name="Lapidus A."/>
            <person name="Glavina del Rio T."/>
            <person name="Dalin E."/>
            <person name="Tice H."/>
            <person name="Bruce D."/>
            <person name="Goodwin L."/>
            <person name="Pitluck S."/>
            <person name="Munk A.C."/>
            <person name="Brettin T."/>
            <person name="Detter J.C."/>
            <person name="Han C."/>
            <person name="Tapia R."/>
            <person name="Schmutz J."/>
            <person name="Larimer F."/>
            <person name="Land M."/>
            <person name="Hauser L."/>
            <person name="Challacombe J.F."/>
            <person name="Green L."/>
            <person name="Lindler L.E."/>
            <person name="Nikolich M.P."/>
            <person name="Richardson P."/>
        </authorList>
    </citation>
    <scope>NUCLEOTIDE SEQUENCE [LARGE SCALE GENOMIC DNA]</scope>
    <source>
        <strain>YPIII</strain>
    </source>
</reference>